<comment type="subcellular location">
    <subcellularLocation>
        <location evidence="1">Cell membrane</location>
        <topology evidence="1">Multi-pass membrane protein</topology>
    </subcellularLocation>
</comment>
<comment type="similarity">
    <text evidence="1">Belongs to the UPF0391 family.</text>
</comment>
<evidence type="ECO:0000255" key="1">
    <source>
        <dbReference type="HAMAP-Rule" id="MF_01361"/>
    </source>
</evidence>
<reference key="1">
    <citation type="journal article" date="2008" name="ISME J.">
        <title>Comparative genomics of two ecotypes of the marine planktonic copiotroph Alteromonas macleodii suggests alternative lifestyles associated with different kinds of particulate organic matter.</title>
        <authorList>
            <person name="Ivars-Martinez E."/>
            <person name="Martin-Cuadrado A.-B."/>
            <person name="D'Auria G."/>
            <person name="Mira A."/>
            <person name="Ferriera S."/>
            <person name="Johnson J."/>
            <person name="Friedman R."/>
            <person name="Rodriguez-Valera F."/>
        </authorList>
    </citation>
    <scope>NUCLEOTIDE SEQUENCE [LARGE SCALE GENOMIC DNA]</scope>
    <source>
        <strain>DSM 17117 / CIP 110805 / LMG 28347 / Deep ecotype</strain>
    </source>
</reference>
<proteinExistence type="inferred from homology"/>
<protein>
    <recommendedName>
        <fullName evidence="1">UPF0391 membrane protein MADE_1011595</fullName>
    </recommendedName>
</protein>
<feature type="chain" id="PRO_1000143704" description="UPF0391 membrane protein MADE_1011595">
    <location>
        <begin position="1"/>
        <end position="58"/>
    </location>
</feature>
<feature type="transmembrane region" description="Helical" evidence="1">
    <location>
        <begin position="4"/>
        <end position="24"/>
    </location>
</feature>
<feature type="transmembrane region" description="Helical" evidence="1">
    <location>
        <begin position="27"/>
        <end position="47"/>
    </location>
</feature>
<sequence>MLGWAITFFIIAIIAAVFGFGGIAGAATGIAQFLFFVFIALLVISLIANALRGRAPKA</sequence>
<accession>B4RUX1</accession>
<accession>F2G555</accession>
<name>Y1267_ALTMD</name>
<gene>
    <name type="ordered locus">MADE_1011595</name>
</gene>
<keyword id="KW-1003">Cell membrane</keyword>
<keyword id="KW-0472">Membrane</keyword>
<keyword id="KW-0812">Transmembrane</keyword>
<keyword id="KW-1133">Transmembrane helix</keyword>
<organism>
    <name type="scientific">Alteromonas mediterranea (strain DSM 17117 / CIP 110805 / LMG 28347 / Deep ecotype)</name>
    <dbReference type="NCBI Taxonomy" id="1774373"/>
    <lineage>
        <taxon>Bacteria</taxon>
        <taxon>Pseudomonadati</taxon>
        <taxon>Pseudomonadota</taxon>
        <taxon>Gammaproteobacteria</taxon>
        <taxon>Alteromonadales</taxon>
        <taxon>Alteromonadaceae</taxon>
        <taxon>Alteromonas/Salinimonas group</taxon>
        <taxon>Alteromonas</taxon>
    </lineage>
</organism>
<dbReference type="EMBL" id="CP001103">
    <property type="protein sequence ID" value="AEA98455.1"/>
    <property type="molecule type" value="Genomic_DNA"/>
</dbReference>
<dbReference type="RefSeq" id="WP_012518774.1">
    <property type="nucleotide sequence ID" value="NC_011138.3"/>
</dbReference>
<dbReference type="KEGG" id="amc:MADE_1011595"/>
<dbReference type="HOGENOM" id="CLU_187346_1_0_6"/>
<dbReference type="Proteomes" id="UP000001870">
    <property type="component" value="Chromosome"/>
</dbReference>
<dbReference type="GO" id="GO:0005886">
    <property type="term" value="C:plasma membrane"/>
    <property type="evidence" value="ECO:0007669"/>
    <property type="project" value="UniProtKB-SubCell"/>
</dbReference>
<dbReference type="HAMAP" id="MF_01361">
    <property type="entry name" value="UPF0391"/>
    <property type="match status" value="1"/>
</dbReference>
<dbReference type="InterPro" id="IPR009760">
    <property type="entry name" value="DUF1328"/>
</dbReference>
<dbReference type="NCBIfam" id="NF010226">
    <property type="entry name" value="PRK13682.1-1"/>
    <property type="match status" value="1"/>
</dbReference>
<dbReference type="NCBIfam" id="NF010228">
    <property type="entry name" value="PRK13682.1-3"/>
    <property type="match status" value="1"/>
</dbReference>
<dbReference type="NCBIfam" id="NF010229">
    <property type="entry name" value="PRK13682.1-4"/>
    <property type="match status" value="1"/>
</dbReference>
<dbReference type="Pfam" id="PF07043">
    <property type="entry name" value="DUF1328"/>
    <property type="match status" value="1"/>
</dbReference>
<dbReference type="PIRSF" id="PIRSF036466">
    <property type="entry name" value="UCP036466"/>
    <property type="match status" value="1"/>
</dbReference>